<keyword id="KW-0002">3D-structure</keyword>
<keyword id="KW-0025">Alternative splicing</keyword>
<keyword id="KW-0963">Cytoplasm</keyword>
<keyword id="KW-0378">Hydrolase</keyword>
<keyword id="KW-0496">Mitochondrion</keyword>
<keyword id="KW-0539">Nucleus</keyword>
<keyword id="KW-1267">Proteomics identification</keyword>
<keyword id="KW-1185">Reference proteome</keyword>
<comment type="function">
    <text evidence="2">May contribute to the regulation of cell proliferation.</text>
</comment>
<comment type="subunit">
    <text evidence="5">Monomer and homodimer.</text>
</comment>
<comment type="subcellular location">
    <subcellularLocation>
        <location>Cytoplasm</location>
    </subcellularLocation>
    <subcellularLocation>
        <location>Nucleus</location>
    </subcellularLocation>
    <subcellularLocation>
        <location>Mitochondrion</location>
    </subcellularLocation>
    <text>Subcellular location may vary between isoforms.</text>
</comment>
<comment type="alternative products">
    <event type="alternative splicing"/>
    <isoform>
        <id>P53370-1</id>
        <name>1</name>
        <name>B</name>
        <sequence type="displayed"/>
    </isoform>
    <isoform>
        <id>P53370-2</id>
        <name>2</name>
        <name>A</name>
        <sequence type="described" ref="VSP_003729"/>
    </isoform>
    <text>Additional isoforms seem to exist.</text>
</comment>
<comment type="tissue specificity">
    <text evidence="2 3">Detected in liver, kidney and esophagus (at protein level). Ubiquitous.</text>
</comment>
<comment type="miscellaneous">
    <text>This protein is coded from a FGF2 (BFGF) gene antisense transcript.</text>
</comment>
<comment type="similarity">
    <text evidence="4">Belongs to the Nudix hydrolase family.</text>
</comment>
<comment type="caution">
    <text evidence="4">The rat protein was reported to play a role in DNA repair (PubMed:9406864), based on its ability to complement E.coli deficient in the DNA repair enzyme mutT that hydrolyzes oxidized guanine nucleotides. PubMed:17569023 found no such activity, neither for the human nor the rat protein.</text>
</comment>
<comment type="online information" name="Atlas of Genetics and Cytogenetics in Oncology and Haematology">
    <link uri="https://atlasgeneticsoncology.org/gene/41593/NUDT6"/>
</comment>
<name>NUDT6_HUMAN</name>
<sequence length="316" mass="35679">MRQPLSWGRWRAMLARTYGPGPSAGYRWASGAQGYVRNPPVGACDLQGELDRFGGISVRLARLDALDRLDAAAFQKGLQAAVQQWRSEGRTAVWLHIPILQSRFIAPAASLGFCFHHAESDSSTLTLWLREGPSRLPGYASHQVGVAGAVFDESTRKILVVQDRNKLKNMWKFPGGLSEPEEDIGDTAVREVFEETGIKSEFRSVLSIRQQHTNPGAFGKSDMYIICRLKPYSFTINFCQEECLRCEWMDLNDLAKTENTTPITSRVARLLLYGYREGFDKIDLTVEELPAVYTGLFYKLYHKELPENYKTMKGID</sequence>
<gene>
    <name type="primary">NUDT6</name>
    <name type="synonym">FGF2AS</name>
</gene>
<reference key="1">
    <citation type="journal article" date="1999" name="J. Cell. Biochem.">
        <title>Characterization of the promoter for the human antisense fibroblast growth factor-2 gene; regulation by Ets in Jurkat T cells.</title>
        <authorList>
            <person name="Gagnon M.L."/>
            <person name="Moy G.K."/>
            <person name="Klagsbrun M."/>
        </authorList>
    </citation>
    <scope>NUCLEOTIDE SEQUENCE [MRNA] (ISOFORM 1)</scope>
    <scope>ALTERNATIVE SPLICING</scope>
</reference>
<reference key="2">
    <citation type="journal article" date="2004" name="Nat. Genet.">
        <title>Complete sequencing and characterization of 21,243 full-length human cDNAs.</title>
        <authorList>
            <person name="Ota T."/>
            <person name="Suzuki Y."/>
            <person name="Nishikawa T."/>
            <person name="Otsuki T."/>
            <person name="Sugiyama T."/>
            <person name="Irie R."/>
            <person name="Wakamatsu A."/>
            <person name="Hayashi K."/>
            <person name="Sato H."/>
            <person name="Nagai K."/>
            <person name="Kimura K."/>
            <person name="Makita H."/>
            <person name="Sekine M."/>
            <person name="Obayashi M."/>
            <person name="Nishi T."/>
            <person name="Shibahara T."/>
            <person name="Tanaka T."/>
            <person name="Ishii S."/>
            <person name="Yamamoto J."/>
            <person name="Saito K."/>
            <person name="Kawai Y."/>
            <person name="Isono Y."/>
            <person name="Nakamura Y."/>
            <person name="Nagahari K."/>
            <person name="Murakami K."/>
            <person name="Yasuda T."/>
            <person name="Iwayanagi T."/>
            <person name="Wagatsuma M."/>
            <person name="Shiratori A."/>
            <person name="Sudo H."/>
            <person name="Hosoiri T."/>
            <person name="Kaku Y."/>
            <person name="Kodaira H."/>
            <person name="Kondo H."/>
            <person name="Sugawara M."/>
            <person name="Takahashi M."/>
            <person name="Kanda K."/>
            <person name="Yokoi T."/>
            <person name="Furuya T."/>
            <person name="Kikkawa E."/>
            <person name="Omura Y."/>
            <person name="Abe K."/>
            <person name="Kamihara K."/>
            <person name="Katsuta N."/>
            <person name="Sato K."/>
            <person name="Tanikawa M."/>
            <person name="Yamazaki M."/>
            <person name="Ninomiya K."/>
            <person name="Ishibashi T."/>
            <person name="Yamashita H."/>
            <person name="Murakawa K."/>
            <person name="Fujimori K."/>
            <person name="Tanai H."/>
            <person name="Kimata M."/>
            <person name="Watanabe M."/>
            <person name="Hiraoka S."/>
            <person name="Chiba Y."/>
            <person name="Ishida S."/>
            <person name="Ono Y."/>
            <person name="Takiguchi S."/>
            <person name="Watanabe S."/>
            <person name="Yosida M."/>
            <person name="Hotuta T."/>
            <person name="Kusano J."/>
            <person name="Kanehori K."/>
            <person name="Takahashi-Fujii A."/>
            <person name="Hara H."/>
            <person name="Tanase T.-O."/>
            <person name="Nomura Y."/>
            <person name="Togiya S."/>
            <person name="Komai F."/>
            <person name="Hara R."/>
            <person name="Takeuchi K."/>
            <person name="Arita M."/>
            <person name="Imose N."/>
            <person name="Musashino K."/>
            <person name="Yuuki H."/>
            <person name="Oshima A."/>
            <person name="Sasaki N."/>
            <person name="Aotsuka S."/>
            <person name="Yoshikawa Y."/>
            <person name="Matsunawa H."/>
            <person name="Ichihara T."/>
            <person name="Shiohata N."/>
            <person name="Sano S."/>
            <person name="Moriya S."/>
            <person name="Momiyama H."/>
            <person name="Satoh N."/>
            <person name="Takami S."/>
            <person name="Terashima Y."/>
            <person name="Suzuki O."/>
            <person name="Nakagawa S."/>
            <person name="Senoh A."/>
            <person name="Mizoguchi H."/>
            <person name="Goto Y."/>
            <person name="Shimizu F."/>
            <person name="Wakebe H."/>
            <person name="Hishigaki H."/>
            <person name="Watanabe T."/>
            <person name="Sugiyama A."/>
            <person name="Takemoto M."/>
            <person name="Kawakami B."/>
            <person name="Yamazaki M."/>
            <person name="Watanabe K."/>
            <person name="Kumagai A."/>
            <person name="Itakura S."/>
            <person name="Fukuzumi Y."/>
            <person name="Fujimori Y."/>
            <person name="Komiyama M."/>
            <person name="Tashiro H."/>
            <person name="Tanigami A."/>
            <person name="Fujiwara T."/>
            <person name="Ono T."/>
            <person name="Yamada K."/>
            <person name="Fujii Y."/>
            <person name="Ozaki K."/>
            <person name="Hirao M."/>
            <person name="Ohmori Y."/>
            <person name="Kawabata A."/>
            <person name="Hikiji T."/>
            <person name="Kobatake N."/>
            <person name="Inagaki H."/>
            <person name="Ikema Y."/>
            <person name="Okamoto S."/>
            <person name="Okitani R."/>
            <person name="Kawakami T."/>
            <person name="Noguchi S."/>
            <person name="Itoh T."/>
            <person name="Shigeta K."/>
            <person name="Senba T."/>
            <person name="Matsumura K."/>
            <person name="Nakajima Y."/>
            <person name="Mizuno T."/>
            <person name="Morinaga M."/>
            <person name="Sasaki M."/>
            <person name="Togashi T."/>
            <person name="Oyama M."/>
            <person name="Hata H."/>
            <person name="Watanabe M."/>
            <person name="Komatsu T."/>
            <person name="Mizushima-Sugano J."/>
            <person name="Satoh T."/>
            <person name="Shirai Y."/>
            <person name="Takahashi Y."/>
            <person name="Nakagawa K."/>
            <person name="Okumura K."/>
            <person name="Nagase T."/>
            <person name="Nomura N."/>
            <person name="Kikuchi H."/>
            <person name="Masuho Y."/>
            <person name="Yamashita R."/>
            <person name="Nakai K."/>
            <person name="Yada T."/>
            <person name="Nakamura Y."/>
            <person name="Ohara O."/>
            <person name="Isogai T."/>
            <person name="Sugano S."/>
        </authorList>
    </citation>
    <scope>NUCLEOTIDE SEQUENCE [LARGE SCALE MRNA] (ISOFORM 1)</scope>
    <source>
        <tissue>Skeletal muscle</tissue>
    </source>
</reference>
<reference key="3">
    <citation type="journal article" date="2004" name="Genome Res.">
        <title>The status, quality, and expansion of the NIH full-length cDNA project: the Mammalian Gene Collection (MGC).</title>
        <authorList>
            <consortium name="The MGC Project Team"/>
        </authorList>
    </citation>
    <scope>NUCLEOTIDE SEQUENCE [LARGE SCALE MRNA] (ISOFORM 1)</scope>
    <source>
        <tissue>Lung</tissue>
    </source>
</reference>
<reference key="4">
    <citation type="journal article" date="1994" name="Mol. Endocrinol.">
        <title>Identification and characterization of an antisense RNA transcript (gfg) from the human basic fibroblast growth factor gene.</title>
        <authorList>
            <person name="Murphy P.R."/>
            <person name="Knee R.S."/>
        </authorList>
    </citation>
    <scope>NUCLEOTIDE SEQUENCE [MRNA] OF 170-269</scope>
    <source>
        <tissue>Astrocytoma</tissue>
    </source>
</reference>
<reference key="5">
    <citation type="journal article" date="2001" name="Mol. Endocrinol.">
        <title>The endogenous fibroblast growth factor-2 antisense gene product regulates pituitary cell growth and hormone production.</title>
        <authorList>
            <person name="Asa S.L."/>
            <person name="Ramyar L."/>
            <person name="Murphy P.R."/>
            <person name="Li A.W."/>
            <person name="Ezzat S."/>
        </authorList>
    </citation>
    <scope>FUNCTION</scope>
    <scope>SUBCELLULAR LOCATION</scope>
    <scope>TISSUE SPECIFICITY</scope>
</reference>
<reference key="6">
    <citation type="journal article" date="2007" name="J. Mol. Med.">
        <title>Alternative splicing of the FGF antisense gene: differential subcellular localization in human tissues and esophageal adenocarcinoma.</title>
        <authorList>
            <person name="Zhang S.C."/>
            <person name="Barclay C."/>
            <person name="Alexander L.A."/>
            <person name="Geldenhuys L."/>
            <person name="Porter G.A."/>
            <person name="Casson A.G."/>
            <person name="Murphy P.R."/>
        </authorList>
    </citation>
    <scope>ALTERNATIVE SPLICING</scope>
    <scope>ABSENCE OF ANTI-MUTATOR FUNCTION IN DNA REPAIR</scope>
    <scope>SUBCELLULAR LOCATION</scope>
    <scope>SUBUNIT</scope>
    <scope>TISSUE SPECIFICITY</scope>
</reference>
<reference key="7">
    <citation type="journal article" date="2014" name="J. Proteomics">
        <title>An enzyme assisted RP-RPLC approach for in-depth analysis of human liver phosphoproteome.</title>
        <authorList>
            <person name="Bian Y."/>
            <person name="Song C."/>
            <person name="Cheng K."/>
            <person name="Dong M."/>
            <person name="Wang F."/>
            <person name="Huang J."/>
            <person name="Sun D."/>
            <person name="Wang L."/>
            <person name="Ye M."/>
            <person name="Zou H."/>
        </authorList>
    </citation>
    <scope>IDENTIFICATION BY MASS SPECTROMETRY [LARGE SCALE ANALYSIS]</scope>
    <source>
        <tissue>Liver</tissue>
    </source>
</reference>
<reference key="8">
    <citation type="submission" date="2009-07" db="PDB data bank">
        <title>Crystal structure of the N-terminal domain and of nudix domain of human NUDT6.</title>
        <authorList>
            <consortium name="Structural genomics consortium (SGC)"/>
        </authorList>
    </citation>
    <scope>X-RAY CRYSTALLOGRAPHY (1.7 ANGSTROMS) OF 45-316</scope>
</reference>
<organism>
    <name type="scientific">Homo sapiens</name>
    <name type="common">Human</name>
    <dbReference type="NCBI Taxonomy" id="9606"/>
    <lineage>
        <taxon>Eukaryota</taxon>
        <taxon>Metazoa</taxon>
        <taxon>Chordata</taxon>
        <taxon>Craniata</taxon>
        <taxon>Vertebrata</taxon>
        <taxon>Euteleostomi</taxon>
        <taxon>Mammalia</taxon>
        <taxon>Eutheria</taxon>
        <taxon>Euarchontoglires</taxon>
        <taxon>Primates</taxon>
        <taxon>Haplorrhini</taxon>
        <taxon>Catarrhini</taxon>
        <taxon>Hominidae</taxon>
        <taxon>Homo</taxon>
    </lineage>
</organism>
<evidence type="ECO:0000255" key="1">
    <source>
        <dbReference type="PROSITE-ProRule" id="PRU00794"/>
    </source>
</evidence>
<evidence type="ECO:0000269" key="2">
    <source>
    </source>
</evidence>
<evidence type="ECO:0000269" key="3">
    <source>
    </source>
</evidence>
<evidence type="ECO:0000305" key="4"/>
<evidence type="ECO:0000305" key="5">
    <source>
    </source>
</evidence>
<evidence type="ECO:0007829" key="6">
    <source>
        <dbReference type="PDB" id="3FXT"/>
    </source>
</evidence>
<evidence type="ECO:0007829" key="7">
    <source>
        <dbReference type="PDB" id="3H95"/>
    </source>
</evidence>
<accession>P53370</accession>
<accession>A8K756</accession>
<accession>O95097</accession>
<accession>Q9UQD9</accession>
<dbReference type="EC" id="3.6.1.-"/>
<dbReference type="EMBL" id="AF019633">
    <property type="protein sequence ID" value="AAD01636.2"/>
    <property type="molecule type" value="mRNA"/>
</dbReference>
<dbReference type="EMBL" id="AF019632">
    <property type="protein sequence ID" value="AAD01635.1"/>
    <property type="molecule type" value="mRNA"/>
</dbReference>
<dbReference type="EMBL" id="AK291871">
    <property type="protein sequence ID" value="BAF84560.1"/>
    <property type="molecule type" value="mRNA"/>
</dbReference>
<dbReference type="EMBL" id="BC009842">
    <property type="protein sequence ID" value="AAH09842.1"/>
    <property type="molecule type" value="mRNA"/>
</dbReference>
<dbReference type="EMBL" id="L31408">
    <property type="protein sequence ID" value="AAA67062.1"/>
    <property type="molecule type" value="mRNA"/>
</dbReference>
<dbReference type="CCDS" id="CCDS3729.1">
    <molecule id="P53370-2"/>
</dbReference>
<dbReference type="CCDS" id="CCDS43268.1">
    <molecule id="P53370-1"/>
</dbReference>
<dbReference type="RefSeq" id="NP_009014.2">
    <molecule id="P53370-1"/>
    <property type="nucleotide sequence ID" value="NM_007083.4"/>
</dbReference>
<dbReference type="RefSeq" id="NP_932158.1">
    <molecule id="P53370-2"/>
    <property type="nucleotide sequence ID" value="NM_198041.3"/>
</dbReference>
<dbReference type="PDB" id="3FXT">
    <property type="method" value="X-ray"/>
    <property type="resolution" value="2.30 A"/>
    <property type="chains" value="A/B/C/D/E/F/G/H=45-134"/>
</dbReference>
<dbReference type="PDB" id="3H95">
    <property type="method" value="X-ray"/>
    <property type="resolution" value="1.70 A"/>
    <property type="chains" value="A=141-316"/>
</dbReference>
<dbReference type="PDBsum" id="3FXT"/>
<dbReference type="PDBsum" id="3H95"/>
<dbReference type="SMR" id="P53370"/>
<dbReference type="BioGRID" id="116333">
    <property type="interactions" value="19"/>
</dbReference>
<dbReference type="FunCoup" id="P53370">
    <property type="interactions" value="496"/>
</dbReference>
<dbReference type="IntAct" id="P53370">
    <property type="interactions" value="18"/>
</dbReference>
<dbReference type="MINT" id="P53370"/>
<dbReference type="STRING" id="9606.ENSP00000306070"/>
<dbReference type="GlyGen" id="P53370">
    <property type="glycosylation" value="1 site, 1 O-linked glycan (1 site)"/>
</dbReference>
<dbReference type="iPTMnet" id="P53370"/>
<dbReference type="PhosphoSitePlus" id="P53370"/>
<dbReference type="BioMuta" id="NUDT6"/>
<dbReference type="DMDM" id="17380446"/>
<dbReference type="jPOST" id="P53370"/>
<dbReference type="MassIVE" id="P53370"/>
<dbReference type="PaxDb" id="9606-ENSP00000306070"/>
<dbReference type="PeptideAtlas" id="P53370"/>
<dbReference type="ProteomicsDB" id="56577">
    <molecule id="P53370-1"/>
</dbReference>
<dbReference type="ProteomicsDB" id="56578">
    <molecule id="P53370-2"/>
</dbReference>
<dbReference type="Pumba" id="P53370"/>
<dbReference type="Antibodypedia" id="26864">
    <property type="antibodies" value="310 antibodies from 28 providers"/>
</dbReference>
<dbReference type="DNASU" id="11162"/>
<dbReference type="Ensembl" id="ENST00000304430.10">
    <molecule id="P53370-1"/>
    <property type="protein sequence ID" value="ENSP00000306070.5"/>
    <property type="gene ID" value="ENSG00000170917.14"/>
</dbReference>
<dbReference type="Ensembl" id="ENST00000339154.6">
    <molecule id="P53370-2"/>
    <property type="protein sequence ID" value="ENSP00000344011.2"/>
    <property type="gene ID" value="ENSG00000170917.14"/>
</dbReference>
<dbReference type="Ensembl" id="ENST00000502270.5">
    <molecule id="P53370-2"/>
    <property type="protein sequence ID" value="ENSP00000424117.1"/>
    <property type="gene ID" value="ENSG00000170917.14"/>
</dbReference>
<dbReference type="GeneID" id="11162"/>
<dbReference type="KEGG" id="hsa:11162"/>
<dbReference type="MANE-Select" id="ENST00000304430.10">
    <property type="protein sequence ID" value="ENSP00000306070.5"/>
    <property type="RefSeq nucleotide sequence ID" value="NM_007083.5"/>
    <property type="RefSeq protein sequence ID" value="NP_009014.2"/>
</dbReference>
<dbReference type="UCSC" id="uc003iew.3">
    <molecule id="P53370-1"/>
    <property type="organism name" value="human"/>
</dbReference>
<dbReference type="AGR" id="HGNC:8053"/>
<dbReference type="CTD" id="11162"/>
<dbReference type="DisGeNET" id="11162"/>
<dbReference type="GeneCards" id="NUDT6"/>
<dbReference type="HGNC" id="HGNC:8053">
    <property type="gene designation" value="NUDT6"/>
</dbReference>
<dbReference type="HPA" id="ENSG00000170917">
    <property type="expression patterns" value="Low tissue specificity"/>
</dbReference>
<dbReference type="MalaCards" id="NUDT6"/>
<dbReference type="MIM" id="606261">
    <property type="type" value="gene"/>
</dbReference>
<dbReference type="neXtProt" id="NX_P53370"/>
<dbReference type="OpenTargets" id="ENSG00000170917"/>
<dbReference type="PharmGKB" id="PA31839"/>
<dbReference type="VEuPathDB" id="HostDB:ENSG00000170917"/>
<dbReference type="eggNOG" id="KOG0648">
    <property type="taxonomic scope" value="Eukaryota"/>
</dbReference>
<dbReference type="GeneTree" id="ENSGT00390000008458"/>
<dbReference type="HOGENOM" id="CLU_054299_4_0_1"/>
<dbReference type="InParanoid" id="P53370"/>
<dbReference type="OMA" id="WRAEGHI"/>
<dbReference type="OrthoDB" id="447842at2759"/>
<dbReference type="PAN-GO" id="P53370">
    <property type="GO annotations" value="3 GO annotations based on evolutionary models"/>
</dbReference>
<dbReference type="PhylomeDB" id="P53370"/>
<dbReference type="TreeFam" id="TF106346"/>
<dbReference type="PathwayCommons" id="P53370"/>
<dbReference type="SignaLink" id="P53370"/>
<dbReference type="BioGRID-ORCS" id="11162">
    <property type="hits" value="15 hits in 1168 CRISPR screens"/>
</dbReference>
<dbReference type="ChiTaRS" id="NUDT6">
    <property type="organism name" value="human"/>
</dbReference>
<dbReference type="EvolutionaryTrace" id="P53370"/>
<dbReference type="GeneWiki" id="NUDT6"/>
<dbReference type="GenomeRNAi" id="11162"/>
<dbReference type="Pharos" id="P53370">
    <property type="development level" value="Tbio"/>
</dbReference>
<dbReference type="PRO" id="PR:P53370"/>
<dbReference type="Proteomes" id="UP000005640">
    <property type="component" value="Chromosome 4"/>
</dbReference>
<dbReference type="RNAct" id="P53370">
    <property type="molecule type" value="protein"/>
</dbReference>
<dbReference type="Bgee" id="ENSG00000170917">
    <property type="expression patterns" value="Expressed in tendon of biceps brachii and 185 other cell types or tissues"/>
</dbReference>
<dbReference type="ExpressionAtlas" id="P53370">
    <property type="expression patterns" value="baseline and differential"/>
</dbReference>
<dbReference type="GO" id="GO:0005737">
    <property type="term" value="C:cytoplasm"/>
    <property type="evidence" value="ECO:0000314"/>
    <property type="project" value="UniProtKB"/>
</dbReference>
<dbReference type="GO" id="GO:0005739">
    <property type="term" value="C:mitochondrion"/>
    <property type="evidence" value="ECO:0000314"/>
    <property type="project" value="FlyBase"/>
</dbReference>
<dbReference type="GO" id="GO:0005634">
    <property type="term" value="C:nucleus"/>
    <property type="evidence" value="ECO:0007669"/>
    <property type="project" value="UniProtKB-SubCell"/>
</dbReference>
<dbReference type="GO" id="GO:0047631">
    <property type="term" value="F:ADP-ribose diphosphatase activity"/>
    <property type="evidence" value="ECO:0000318"/>
    <property type="project" value="GO_Central"/>
</dbReference>
<dbReference type="GO" id="GO:0051287">
    <property type="term" value="F:NAD binding"/>
    <property type="evidence" value="ECO:0000318"/>
    <property type="project" value="GO_Central"/>
</dbReference>
<dbReference type="GO" id="GO:0035529">
    <property type="term" value="F:NADH pyrophosphatase activity"/>
    <property type="evidence" value="ECO:0000314"/>
    <property type="project" value="FlyBase"/>
</dbReference>
<dbReference type="GO" id="GO:0045786">
    <property type="term" value="P:negative regulation of cell cycle"/>
    <property type="evidence" value="ECO:0000314"/>
    <property type="project" value="UniProtKB"/>
</dbReference>
<dbReference type="GO" id="GO:0008285">
    <property type="term" value="P:negative regulation of cell population proliferation"/>
    <property type="evidence" value="ECO:0000314"/>
    <property type="project" value="UniProtKB"/>
</dbReference>
<dbReference type="CDD" id="cd04670">
    <property type="entry name" value="NUDIX_ASFGF2_Nudt6"/>
    <property type="match status" value="1"/>
</dbReference>
<dbReference type="FunFam" id="3.40.630.30:FF:000062">
    <property type="entry name" value="Nucleoside diphosphate-linked moiety X motif 6"/>
    <property type="match status" value="1"/>
</dbReference>
<dbReference type="FunFam" id="4.10.80.100:FF:000001">
    <property type="entry name" value="Nucleoside diphosphate-linked moiety X motif 6"/>
    <property type="match status" value="1"/>
</dbReference>
<dbReference type="FunFam" id="3.90.79.10:FF:000027">
    <property type="entry name" value="nucleoside diphosphate-linked moiety X motif 6"/>
    <property type="match status" value="1"/>
</dbReference>
<dbReference type="Gene3D" id="3.40.630.30">
    <property type="match status" value="1"/>
</dbReference>
<dbReference type="Gene3D" id="4.10.80.100">
    <property type="match status" value="1"/>
</dbReference>
<dbReference type="Gene3D" id="3.90.79.10">
    <property type="entry name" value="Nucleoside Triphosphate Pyrophosphohydrolase"/>
    <property type="match status" value="1"/>
</dbReference>
<dbReference type="InterPro" id="IPR015797">
    <property type="entry name" value="NUDIX_hydrolase-like_dom_sf"/>
</dbReference>
<dbReference type="InterPro" id="IPR003293">
    <property type="entry name" value="Nudix_hydrolase6-like"/>
</dbReference>
<dbReference type="InterPro" id="IPR020084">
    <property type="entry name" value="NUDIX_hydrolase_CS"/>
</dbReference>
<dbReference type="InterPro" id="IPR000086">
    <property type="entry name" value="NUDIX_hydrolase_dom"/>
</dbReference>
<dbReference type="InterPro" id="IPR040618">
    <property type="entry name" value="Pre-Nudix"/>
</dbReference>
<dbReference type="PANTHER" id="PTHR13994:SF46">
    <property type="entry name" value="NUCLEOSIDE DIPHOSPHATE-LINKED MOIETY X MOTIF 6"/>
    <property type="match status" value="1"/>
</dbReference>
<dbReference type="PANTHER" id="PTHR13994">
    <property type="entry name" value="NUDIX HYDROLASE RELATED"/>
    <property type="match status" value="1"/>
</dbReference>
<dbReference type="Pfam" id="PF00293">
    <property type="entry name" value="NUDIX"/>
    <property type="match status" value="1"/>
</dbReference>
<dbReference type="Pfam" id="PF18290">
    <property type="entry name" value="Nudix_hydro"/>
    <property type="match status" value="1"/>
</dbReference>
<dbReference type="PRINTS" id="PR01356">
    <property type="entry name" value="GFGPROTEIN"/>
</dbReference>
<dbReference type="SUPFAM" id="SSF55811">
    <property type="entry name" value="Nudix"/>
    <property type="match status" value="1"/>
</dbReference>
<dbReference type="PROSITE" id="PS51462">
    <property type="entry name" value="NUDIX"/>
    <property type="match status" value="1"/>
</dbReference>
<dbReference type="PROSITE" id="PS00893">
    <property type="entry name" value="NUDIX_BOX"/>
    <property type="match status" value="1"/>
</dbReference>
<protein>
    <recommendedName>
        <fullName>Nucleoside diphosphate-linked moiety X motif 6</fullName>
        <shortName>Nudix motif 6</shortName>
        <ecNumber>3.6.1.-</ecNumber>
    </recommendedName>
    <alternativeName>
        <fullName>Antisense basic fibroblast growth factor</fullName>
    </alternativeName>
    <alternativeName>
        <fullName>Protein GFG</fullName>
    </alternativeName>
</protein>
<feature type="chain" id="PRO_0000057107" description="Nucleoside diphosphate-linked moiety X motif 6">
    <location>
        <begin position="1"/>
        <end position="316"/>
    </location>
</feature>
<feature type="domain" description="Nudix hydrolase" evidence="1">
    <location>
        <begin position="141"/>
        <end position="273"/>
    </location>
</feature>
<feature type="short sequence motif" description="Nudix box">
    <location>
        <begin position="176"/>
        <end position="197"/>
    </location>
</feature>
<feature type="splice variant" id="VSP_003729" description="In isoform 2." evidence="4">
    <location>
        <begin position="1"/>
        <end position="169"/>
    </location>
</feature>
<feature type="sequence variant" id="VAR_050412" description="In dbSNP:rs12648093.">
    <original>C</original>
    <variation>R</variation>
    <location>
        <position position="114"/>
    </location>
</feature>
<feature type="sequence variant" id="VAR_021909" description="In dbSNP:rs1048201.">
    <original>R</original>
    <variation>Q</variation>
    <location>
        <position position="209"/>
    </location>
</feature>
<feature type="sequence conflict" description="In Ref. 4; AAA67062." evidence="4" ref="4">
    <original>E</original>
    <variation>G</variation>
    <location>
        <position position="181"/>
    </location>
</feature>
<feature type="sequence conflict" description="In Ref. 4; AAA67062." evidence="4" ref="4">
    <original>I</original>
    <variation>V</variation>
    <location>
        <position position="198"/>
    </location>
</feature>
<feature type="sequence conflict" description="In Ref. 4; AAA67062." evidence="4" ref="4">
    <original>V</original>
    <variation>L</variation>
    <location>
        <position position="205"/>
    </location>
</feature>
<feature type="sequence conflict" description="In Ref. 4; AAA67062." evidence="4" ref="4">
    <original>TN</original>
    <variation>RS</variation>
    <location>
        <begin position="213"/>
        <end position="214"/>
    </location>
</feature>
<feature type="sequence conflict" description="In Ref. 4; AAA67062." evidence="4" ref="4">
    <original>A</original>
    <variation>R</variation>
    <location>
        <position position="217"/>
    </location>
</feature>
<feature type="sequence conflict" description="In Ref. 4; AAA67062." evidence="4" ref="4">
    <original>K</original>
    <variation>M</variation>
    <location>
        <position position="220"/>
    </location>
</feature>
<feature type="sequence conflict" description="In Ref. 4; AAA67062." evidence="4" ref="4">
    <original>I</original>
    <variation>L</variation>
    <location>
        <position position="225"/>
    </location>
</feature>
<feature type="sequence conflict" description="In Ref. 4; AAA67062." evidence="4" ref="4">
    <original>KPY</original>
    <variation>QPR</variation>
    <location>
        <begin position="230"/>
        <end position="232"/>
    </location>
</feature>
<feature type="sequence conflict" description="In Ref. 4; AAA67062." evidence="4" ref="4">
    <original>E</original>
    <variation>Q</variation>
    <location>
        <position position="241"/>
    </location>
</feature>
<feature type="sequence conflict" description="In Ref. 4; AAA67062." evidence="4" ref="4">
    <original>R</original>
    <variation>K</variation>
    <location>
        <position position="245"/>
    </location>
</feature>
<feature type="sequence conflict" description="In Ref. 4; AAA67062." evidence="4" ref="4">
    <original>ND</original>
    <variation>ES</variation>
    <location>
        <begin position="252"/>
        <end position="253"/>
    </location>
</feature>
<feature type="sequence conflict" description="In Ref. 4; AAA67062." evidence="4" ref="4">
    <original>KTEN</original>
    <variation>RTKH</variation>
    <location>
        <begin position="256"/>
        <end position="259"/>
    </location>
</feature>
<feature type="strand" evidence="6">
    <location>
        <begin position="56"/>
        <end position="59"/>
    </location>
</feature>
<feature type="helix" evidence="6">
    <location>
        <begin position="60"/>
        <end position="63"/>
    </location>
</feature>
<feature type="turn" evidence="6">
    <location>
        <begin position="64"/>
        <end position="66"/>
    </location>
</feature>
<feature type="helix" evidence="6">
    <location>
        <begin position="71"/>
        <end position="87"/>
    </location>
</feature>
<feature type="strand" evidence="6">
    <location>
        <begin position="92"/>
        <end position="98"/>
    </location>
</feature>
<feature type="helix" evidence="6">
    <location>
        <begin position="99"/>
        <end position="104"/>
    </location>
</feature>
<feature type="helix" evidence="6">
    <location>
        <begin position="105"/>
        <end position="110"/>
    </location>
</feature>
<feature type="strand" evidence="6">
    <location>
        <begin position="114"/>
        <end position="120"/>
    </location>
</feature>
<feature type="strand" evidence="6">
    <location>
        <begin position="122"/>
        <end position="128"/>
    </location>
</feature>
<feature type="strand" evidence="7">
    <location>
        <begin position="145"/>
        <end position="152"/>
    </location>
</feature>
<feature type="turn" evidence="7">
    <location>
        <begin position="153"/>
        <end position="156"/>
    </location>
</feature>
<feature type="strand" evidence="7">
    <location>
        <begin position="157"/>
        <end position="167"/>
    </location>
</feature>
<feature type="strand" evidence="7">
    <location>
        <begin position="170"/>
        <end position="172"/>
    </location>
</feature>
<feature type="strand" evidence="7">
    <location>
        <begin position="175"/>
        <end position="177"/>
    </location>
</feature>
<feature type="helix" evidence="7">
    <location>
        <begin position="184"/>
        <end position="196"/>
    </location>
</feature>
<feature type="strand" evidence="7">
    <location>
        <begin position="200"/>
        <end position="210"/>
    </location>
</feature>
<feature type="strand" evidence="7">
    <location>
        <begin position="223"/>
        <end position="232"/>
    </location>
</feature>
<feature type="turn" evidence="7">
    <location>
        <begin position="240"/>
        <end position="242"/>
    </location>
</feature>
<feature type="strand" evidence="7">
    <location>
        <begin position="243"/>
        <end position="250"/>
    </location>
</feature>
<feature type="helix" evidence="7">
    <location>
        <begin position="251"/>
        <end position="256"/>
    </location>
</feature>
<feature type="strand" evidence="7">
    <location>
        <begin position="258"/>
        <end position="260"/>
    </location>
</feature>
<feature type="helix" evidence="7">
    <location>
        <begin position="262"/>
        <end position="277"/>
    </location>
</feature>
<feature type="helix" evidence="7">
    <location>
        <begin position="279"/>
        <end position="281"/>
    </location>
</feature>
<feature type="strand" evidence="7">
    <location>
        <begin position="284"/>
        <end position="290"/>
    </location>
</feature>
<feature type="strand" evidence="7">
    <location>
        <begin position="292"/>
        <end position="295"/>
    </location>
</feature>
<feature type="strand" evidence="7">
    <location>
        <begin position="297"/>
        <end position="303"/>
    </location>
</feature>
<feature type="helix" evidence="7">
    <location>
        <begin position="307"/>
        <end position="310"/>
    </location>
</feature>
<proteinExistence type="evidence at protein level"/>